<reference key="1">
    <citation type="journal article" date="1996" name="Yeast">
        <title>Fifteen open reading frames in a 30.8 kb region of the right arm of chromosome VI from Saccharomyces cerevisiae.</title>
        <authorList>
            <person name="Eki T."/>
            <person name="Naitou M."/>
            <person name="Hagiwara H."/>
            <person name="Abe M."/>
            <person name="Ozawa M."/>
            <person name="Sasanuma S."/>
            <person name="Sasanuma M."/>
            <person name="Tsuchiya Y."/>
            <person name="Shibata T."/>
            <person name="Watanabe K."/>
            <person name="Ono A."/>
            <person name="Yamazaki M."/>
            <person name="Tashiro H."/>
            <person name="Hanaoka F."/>
            <person name="Murakami Y."/>
        </authorList>
    </citation>
    <scope>NUCLEOTIDE SEQUENCE [GENOMIC DNA]</scope>
    <source>
        <strain>ATCC 204511 / S288c / AB972</strain>
    </source>
</reference>
<reference key="2">
    <citation type="journal article" date="1995" name="Nat. Genet.">
        <title>Analysis of the nucleotide sequence of chromosome VI from Saccharomyces cerevisiae.</title>
        <authorList>
            <person name="Murakami Y."/>
            <person name="Naitou M."/>
            <person name="Hagiwara H."/>
            <person name="Shibata T."/>
            <person name="Ozawa M."/>
            <person name="Sasanuma S."/>
            <person name="Sasanuma M."/>
            <person name="Tsuchiya Y."/>
            <person name="Soeda E."/>
            <person name="Yokoyama K."/>
            <person name="Yamazaki M."/>
            <person name="Tashiro H."/>
            <person name="Eki T."/>
        </authorList>
    </citation>
    <scope>NUCLEOTIDE SEQUENCE [LARGE SCALE GENOMIC DNA]</scope>
    <source>
        <strain>ATCC 204508 / S288c</strain>
    </source>
</reference>
<reference key="3">
    <citation type="journal article" date="2014" name="G3 (Bethesda)">
        <title>The reference genome sequence of Saccharomyces cerevisiae: Then and now.</title>
        <authorList>
            <person name="Engel S.R."/>
            <person name="Dietrich F.S."/>
            <person name="Fisk D.G."/>
            <person name="Binkley G."/>
            <person name="Balakrishnan R."/>
            <person name="Costanzo M.C."/>
            <person name="Dwight S.S."/>
            <person name="Hitz B.C."/>
            <person name="Karra K."/>
            <person name="Nash R.S."/>
            <person name="Weng S."/>
            <person name="Wong E.D."/>
            <person name="Lloyd P."/>
            <person name="Skrzypek M.S."/>
            <person name="Miyasato S.R."/>
            <person name="Simison M."/>
            <person name="Cherry J.M."/>
        </authorList>
    </citation>
    <scope>GENOME REANNOTATION</scope>
    <source>
        <strain>ATCC 204508 / S288c</strain>
    </source>
</reference>
<reference key="4">
    <citation type="journal article" date="2007" name="Genome Res.">
        <title>Approaching a complete repository of sequence-verified protein-encoding clones for Saccharomyces cerevisiae.</title>
        <authorList>
            <person name="Hu Y."/>
            <person name="Rolfs A."/>
            <person name="Bhullar B."/>
            <person name="Murthy T.V.S."/>
            <person name="Zhu C."/>
            <person name="Berger M.F."/>
            <person name="Camargo A.A."/>
            <person name="Kelley F."/>
            <person name="McCarron S."/>
            <person name="Jepson D."/>
            <person name="Richardson A."/>
            <person name="Raphael J."/>
            <person name="Moreira D."/>
            <person name="Taycher E."/>
            <person name="Zuo D."/>
            <person name="Mohr S."/>
            <person name="Kane M.F."/>
            <person name="Williamson J."/>
            <person name="Simpson A.J.G."/>
            <person name="Bulyk M.L."/>
            <person name="Harlow E."/>
            <person name="Marsischky G."/>
            <person name="Kolodner R.D."/>
            <person name="LaBaer J."/>
        </authorList>
    </citation>
    <scope>NUCLEOTIDE SEQUENCE [GENOMIC DNA]</scope>
    <source>
        <strain>ATCC 204508 / S288c</strain>
    </source>
</reference>
<evidence type="ECO:0000255" key="1"/>
<evidence type="ECO:0000305" key="2"/>
<protein>
    <recommendedName>
        <fullName>Uncharacterized protein YFR035C</fullName>
    </recommendedName>
</protein>
<organism>
    <name type="scientific">Saccharomyces cerevisiae (strain ATCC 204508 / S288c)</name>
    <name type="common">Baker's yeast</name>
    <dbReference type="NCBI Taxonomy" id="559292"/>
    <lineage>
        <taxon>Eukaryota</taxon>
        <taxon>Fungi</taxon>
        <taxon>Dikarya</taxon>
        <taxon>Ascomycota</taxon>
        <taxon>Saccharomycotina</taxon>
        <taxon>Saccharomycetes</taxon>
        <taxon>Saccharomycetales</taxon>
        <taxon>Saccharomycetaceae</taxon>
        <taxon>Saccharomyces</taxon>
    </lineage>
</organism>
<comment type="subcellular location">
    <subcellularLocation>
        <location evidence="2">Membrane</location>
        <topology evidence="2">Multi-pass membrane protein</topology>
    </subcellularLocation>
</comment>
<feature type="chain" id="PRO_0000202693" description="Uncharacterized protein YFR035C">
    <location>
        <begin position="1"/>
        <end position="114"/>
    </location>
</feature>
<feature type="transmembrane region" description="Helical" evidence="1">
    <location>
        <begin position="58"/>
        <end position="78"/>
    </location>
</feature>
<feature type="transmembrane region" description="Helical" evidence="1">
    <location>
        <begin position="94"/>
        <end position="114"/>
    </location>
</feature>
<dbReference type="EMBL" id="D50617">
    <property type="protein sequence ID" value="BAA09274.1"/>
    <property type="molecule type" value="Genomic_DNA"/>
</dbReference>
<dbReference type="EMBL" id="AY558476">
    <property type="protein sequence ID" value="AAS56802.1"/>
    <property type="molecule type" value="Genomic_DNA"/>
</dbReference>
<dbReference type="EMBL" id="BK006940">
    <property type="protein sequence ID" value="DAA12478.1"/>
    <property type="molecule type" value="Genomic_DNA"/>
</dbReference>
<dbReference type="PIR" id="S56290">
    <property type="entry name" value="S56290"/>
</dbReference>
<dbReference type="RefSeq" id="NP_116693.3">
    <property type="nucleotide sequence ID" value="NM_001180000.3"/>
</dbReference>
<dbReference type="BioGRID" id="31192">
    <property type="interactions" value="54"/>
</dbReference>
<dbReference type="FunCoup" id="P43608">
    <property type="interactions" value="43"/>
</dbReference>
<dbReference type="STRING" id="4932.YFR035C"/>
<dbReference type="PaxDb" id="4932-YFR035C"/>
<dbReference type="EnsemblFungi" id="YFR035C_mRNA">
    <property type="protein sequence ID" value="YFR035C"/>
    <property type="gene ID" value="YFR035C"/>
</dbReference>
<dbReference type="GeneID" id="850595"/>
<dbReference type="KEGG" id="sce:YFR035C"/>
<dbReference type="AGR" id="SGD:S000001931"/>
<dbReference type="SGD" id="S000001931">
    <property type="gene designation" value="YFR035C"/>
</dbReference>
<dbReference type="VEuPathDB" id="FungiDB:YFR035C"/>
<dbReference type="HOGENOM" id="CLU_2122997_0_0_1"/>
<dbReference type="InParanoid" id="P43608"/>
<dbReference type="OrthoDB" id="4066901at2759"/>
<dbReference type="BioCyc" id="YEAST:G3O-30482-MONOMER"/>
<dbReference type="BioGRID-ORCS" id="850595">
    <property type="hits" value="4 hits in 10 CRISPR screens"/>
</dbReference>
<dbReference type="PRO" id="PR:P43608"/>
<dbReference type="Proteomes" id="UP000002311">
    <property type="component" value="Chromosome VI"/>
</dbReference>
<dbReference type="RNAct" id="P43608">
    <property type="molecule type" value="protein"/>
</dbReference>
<dbReference type="GO" id="GO:0016020">
    <property type="term" value="C:membrane"/>
    <property type="evidence" value="ECO:0007669"/>
    <property type="project" value="UniProtKB-SubCell"/>
</dbReference>
<gene>
    <name type="ordered locus">YFR035C</name>
</gene>
<sequence length="114" mass="12457">MSASDKTKLCNKGMSRTSRTTTFVITPAFRERDDEGANSLCKAFLNTFSNLKSGMFKCLLGVGAVGTFISTFPQFFLLPCLLCVRCVCVCLCASISYAASAIFSFSIFFFFCLA</sequence>
<name>YFK5_YEAST</name>
<proteinExistence type="predicted"/>
<accession>P43608</accession>
<accession>D6VTR8</accession>
<keyword id="KW-0472">Membrane</keyword>
<keyword id="KW-1185">Reference proteome</keyword>
<keyword id="KW-0812">Transmembrane</keyword>
<keyword id="KW-1133">Transmembrane helix</keyword>